<comment type="function">
    <text evidence="1">Catalyzes the removal of terminal sialic acid residues from viral and cellular glycoconjugates. Cleaves off the terminal sialic acids on the glycosylated HA during virus budding to facilitate virus release. Additionally helps virus spread through the circulation by further removing sialic acids from the cell surface. These cleavages prevent self-aggregation and ensure the efficient spread of the progeny virus from cell to cell. Otherwise, infection would be limited to one round of replication. Described as a receptor-destroying enzyme because it cleaves a terminal sialic acid from the cellular receptors. May facilitate viral invasion of the upper airways by cleaving the sialic acid moieties on the mucin of the airway epithelial cells. Likely to plays a role in the budding process through its association with lipid rafts during intracellular transport. May additionally display a raft-association independent effect on budding. Plays a role in the determination of host range restriction on replication and virulence. Sialidase activity in late endosome/lysosome traffic seems to enhance virus replication.</text>
</comment>
<comment type="catalytic activity">
    <reaction evidence="1">
        <text>Hydrolysis of alpha-(2-&gt;3)-, alpha-(2-&gt;6)-, alpha-(2-&gt;8)- glycosidic linkages of terminal sialic acid residues in oligosaccharides, glycoproteins, glycolipids, colominic acid and synthetic substrates.</text>
        <dbReference type="EC" id="3.2.1.18"/>
    </reaction>
</comment>
<comment type="cofactor">
    <cofactor evidence="1">
        <name>Ca(2+)</name>
        <dbReference type="ChEBI" id="CHEBI:29108"/>
    </cofactor>
</comment>
<comment type="activity regulation">
    <text evidence="1">Inhibited by the neuraminidase inhibitors zanamivir (Relenza) and oseltamivir (Tamiflu). These drugs interfere with the release of progeny virus from infected cells and are effective against all influenza strains. Resistance to neuraminidase inhibitors is quite rare.</text>
</comment>
<comment type="subunit">
    <text evidence="1">Homotetramer.</text>
</comment>
<comment type="subcellular location">
    <subcellularLocation>
        <location evidence="1">Virion membrane</location>
    </subcellularLocation>
    <subcellularLocation>
        <location evidence="1">Host apical cell membrane</location>
        <topology evidence="1">Single-pass type II membrane protein</topology>
    </subcellularLocation>
    <text evidence="1">Preferentially accumulates at the apical plasma membrane in infected polarized epithelial cells, which is the virus assembly site. Uses lipid rafts for cell surface transport and apical sorting. In the virion, forms a mushroom-shaped spike on the surface of the membrane.</text>
</comment>
<comment type="domain">
    <text evidence="1">Intact N-terminus is essential for virion morphogenesis. Possesses two apical sorting signals, one in the ectodomain, which is likely to be a glycan, and the other in the transmembrane domain. The transmembrane domain also plays a role in lipid raft association.</text>
</comment>
<comment type="PTM">
    <text evidence="1">N-glycosylated.</text>
</comment>
<comment type="miscellaneous">
    <text>The influenza A genome consist of 8 RNA segments. Genetic variation of hemagglutinin and/or neuraminidase genes results in the emergence of new influenza strains. The mechanism of variation can be the result of point mutations or the result of genetic reassortment between segments of two different strains.</text>
</comment>
<comment type="similarity">
    <text evidence="1">Belongs to the glycosyl hydrolase 34 family.</text>
</comment>
<organism>
    <name type="scientific">Influenza A virus (strain A/Hong Kong/5/1983 H3N2)</name>
    <dbReference type="NCBI Taxonomy" id="387159"/>
    <lineage>
        <taxon>Viruses</taxon>
        <taxon>Riboviria</taxon>
        <taxon>Orthornavirae</taxon>
        <taxon>Negarnaviricota</taxon>
        <taxon>Polyploviricotina</taxon>
        <taxon>Insthoviricetes</taxon>
        <taxon>Articulavirales</taxon>
        <taxon>Orthomyxoviridae</taxon>
        <taxon>Alphainfluenzavirus</taxon>
        <taxon>Alphainfluenzavirus influenzae</taxon>
        <taxon>Influenza A virus</taxon>
    </lineage>
</organism>
<name>NRAM_I83A8</name>
<organismHost>
    <name type="scientific">Aves</name>
    <dbReference type="NCBI Taxonomy" id="8782"/>
</organismHost>
<organismHost>
    <name type="scientific">Cetacea</name>
    <name type="common">whales</name>
    <dbReference type="NCBI Taxonomy" id="9721"/>
</organismHost>
<organismHost>
    <name type="scientific">Homo sapiens</name>
    <name type="common">Human</name>
    <dbReference type="NCBI Taxonomy" id="9606"/>
</organismHost>
<organismHost>
    <name type="scientific">Phocidae</name>
    <name type="common">true seals</name>
    <dbReference type="NCBI Taxonomy" id="9709"/>
</organismHost>
<organismHost>
    <name type="scientific">Sus scrofa</name>
    <name type="common">Pig</name>
    <dbReference type="NCBI Taxonomy" id="9823"/>
</organismHost>
<gene>
    <name evidence="1" type="primary">NA</name>
</gene>
<protein>
    <recommendedName>
        <fullName evidence="1">Neuraminidase</fullName>
        <ecNumber evidence="1">3.2.1.18</ecNumber>
    </recommendedName>
</protein>
<sequence>MNPNQKIITIGSVSLTIATICFLMQIAILVTTVTLHFKQYECSSPPNNQVMPCEPIIIERNITEIVYLTNTTIEKEICPKLVEYRNWSKPQCKITGFAPFSKDNSIRLSAGGDIWVTREPYVSCDPGKCYQFALGQGTTLNNKHSNDTIHDRTPYRTLLMNELGVPFHLGTKQVCIAWSSSSCHDGKAWLHVCVTGHDKNATASFIYDGRLVDSIGSWSKNILRTQESECVCINGTCTVVMTDGSASERADTKILFIEEGKIVHISPLSGSAQHVEECSCYPRYPGVRCVCRDNWKGSNRPIVDINVKDYSIVSSYVCSGLVGDTPRKNDRSSSSYCRNPNNEKGNHGVKGWAFDDGNDVWMGRTIGEELRSGYETFKVIGGWSTPNSKLQINRQVIVDSDNRSGYSGIFSVEGKSCINRCFYVELIRGREQETRVWWTSNSIVVFCGTSGTYGTGSWPDGADINLMPI</sequence>
<evidence type="ECO:0000255" key="1">
    <source>
        <dbReference type="HAMAP-Rule" id="MF_04071"/>
    </source>
</evidence>
<keyword id="KW-0106">Calcium</keyword>
<keyword id="KW-1015">Disulfide bond</keyword>
<keyword id="KW-0325">Glycoprotein</keyword>
<keyword id="KW-0326">Glycosidase</keyword>
<keyword id="KW-1032">Host cell membrane</keyword>
<keyword id="KW-1043">Host membrane</keyword>
<keyword id="KW-0378">Hydrolase</keyword>
<keyword id="KW-0472">Membrane</keyword>
<keyword id="KW-0479">Metal-binding</keyword>
<keyword id="KW-0735">Signal-anchor</keyword>
<keyword id="KW-0812">Transmembrane</keyword>
<keyword id="KW-1133">Transmembrane helix</keyword>
<keyword id="KW-0946">Virion</keyword>
<dbReference type="EC" id="3.2.1.18" evidence="1"/>
<dbReference type="EMBL" id="CY003738">
    <property type="protein sequence ID" value="ABB04942.1"/>
    <property type="molecule type" value="Genomic_RNA"/>
</dbReference>
<dbReference type="SMR" id="Q38SQ5"/>
<dbReference type="CAZy" id="GH34">
    <property type="family name" value="Glycoside Hydrolase Family 34"/>
</dbReference>
<dbReference type="GlyCosmos" id="Q38SQ5">
    <property type="glycosylation" value="7 sites, No reported glycans"/>
</dbReference>
<dbReference type="PRO" id="PR:Q38SQ5"/>
<dbReference type="Proteomes" id="UP000167548">
    <property type="component" value="Genome"/>
</dbReference>
<dbReference type="GO" id="GO:0020002">
    <property type="term" value="C:host cell plasma membrane"/>
    <property type="evidence" value="ECO:0007669"/>
    <property type="project" value="UniProtKB-SubCell"/>
</dbReference>
<dbReference type="GO" id="GO:0016020">
    <property type="term" value="C:membrane"/>
    <property type="evidence" value="ECO:0007669"/>
    <property type="project" value="UniProtKB-UniRule"/>
</dbReference>
<dbReference type="GO" id="GO:0055036">
    <property type="term" value="C:virion membrane"/>
    <property type="evidence" value="ECO:0007669"/>
    <property type="project" value="UniProtKB-SubCell"/>
</dbReference>
<dbReference type="GO" id="GO:0004308">
    <property type="term" value="F:exo-alpha-sialidase activity"/>
    <property type="evidence" value="ECO:0007669"/>
    <property type="project" value="UniProtKB-UniRule"/>
</dbReference>
<dbReference type="GO" id="GO:0046872">
    <property type="term" value="F:metal ion binding"/>
    <property type="evidence" value="ECO:0007669"/>
    <property type="project" value="UniProtKB-UniRule"/>
</dbReference>
<dbReference type="GO" id="GO:0005975">
    <property type="term" value="P:carbohydrate metabolic process"/>
    <property type="evidence" value="ECO:0007669"/>
    <property type="project" value="InterPro"/>
</dbReference>
<dbReference type="GO" id="GO:0046761">
    <property type="term" value="P:viral budding from plasma membrane"/>
    <property type="evidence" value="ECO:0007669"/>
    <property type="project" value="UniProtKB-UniRule"/>
</dbReference>
<dbReference type="CDD" id="cd15483">
    <property type="entry name" value="Influenza_NA"/>
    <property type="match status" value="1"/>
</dbReference>
<dbReference type="Gene3D" id="2.120.10.10">
    <property type="match status" value="1"/>
</dbReference>
<dbReference type="HAMAP" id="MF_04071">
    <property type="entry name" value="INFV_NRAM"/>
    <property type="match status" value="1"/>
</dbReference>
<dbReference type="InterPro" id="IPR001860">
    <property type="entry name" value="Glyco_hydro_34"/>
</dbReference>
<dbReference type="InterPro" id="IPR033654">
    <property type="entry name" value="Sialidase_Influenza_A/B"/>
</dbReference>
<dbReference type="InterPro" id="IPR036278">
    <property type="entry name" value="Sialidase_sf"/>
</dbReference>
<dbReference type="Pfam" id="PF00064">
    <property type="entry name" value="Neur"/>
    <property type="match status" value="1"/>
</dbReference>
<dbReference type="SUPFAM" id="SSF50939">
    <property type="entry name" value="Sialidases"/>
    <property type="match status" value="1"/>
</dbReference>
<feature type="chain" id="PRO_0000280137" description="Neuraminidase">
    <location>
        <begin position="1"/>
        <end position="469"/>
    </location>
</feature>
<feature type="topological domain" description="Intravirion" evidence="1">
    <location>
        <begin position="1"/>
        <end position="9"/>
    </location>
</feature>
<feature type="transmembrane region" description="Helical" evidence="1">
    <location>
        <begin position="10"/>
        <end position="30"/>
    </location>
</feature>
<feature type="topological domain" description="Virion surface" evidence="1">
    <location>
        <begin position="31"/>
        <end position="469"/>
    </location>
</feature>
<feature type="region of interest" description="Involved in apical transport and lipid raft association" evidence="1">
    <location>
        <begin position="11"/>
        <end position="33"/>
    </location>
</feature>
<feature type="region of interest" description="Hypervariable stalk region" evidence="1">
    <location>
        <begin position="36"/>
        <end position="88"/>
    </location>
</feature>
<feature type="region of interest" description="Head of neuraminidase" evidence="1">
    <location>
        <begin position="91"/>
        <end position="469"/>
    </location>
</feature>
<feature type="active site" description="Proton donor/acceptor" evidence="1">
    <location>
        <position position="151"/>
    </location>
</feature>
<feature type="active site" description="Nucleophile" evidence="1">
    <location>
        <position position="406"/>
    </location>
</feature>
<feature type="binding site" evidence="1">
    <location>
        <position position="118"/>
    </location>
    <ligand>
        <name>substrate</name>
    </ligand>
</feature>
<feature type="binding site" evidence="1">
    <location>
        <position position="152"/>
    </location>
    <ligand>
        <name>substrate</name>
    </ligand>
</feature>
<feature type="binding site" evidence="1">
    <location>
        <begin position="276"/>
        <end position="277"/>
    </location>
    <ligand>
        <name>substrate</name>
    </ligand>
</feature>
<feature type="binding site" evidence="1">
    <location>
        <position position="292"/>
    </location>
    <ligand>
        <name>substrate</name>
    </ligand>
</feature>
<feature type="binding site" evidence="1">
    <location>
        <position position="293"/>
    </location>
    <ligand>
        <name>Ca(2+)</name>
        <dbReference type="ChEBI" id="CHEBI:29108"/>
    </ligand>
</feature>
<feature type="binding site" evidence="1">
    <location>
        <position position="297"/>
    </location>
    <ligand>
        <name>Ca(2+)</name>
        <dbReference type="ChEBI" id="CHEBI:29108"/>
    </ligand>
</feature>
<feature type="binding site" evidence="1">
    <location>
        <position position="324"/>
    </location>
    <ligand>
        <name>Ca(2+)</name>
        <dbReference type="ChEBI" id="CHEBI:29108"/>
    </ligand>
</feature>
<feature type="binding site" evidence="1">
    <location>
        <position position="371"/>
    </location>
    <ligand>
        <name>substrate</name>
    </ligand>
</feature>
<feature type="glycosylation site" description="N-linked (GlcNAc...) asparagine; by host" evidence="1">
    <location>
        <position position="61"/>
    </location>
</feature>
<feature type="glycosylation site" description="N-linked (GlcNAc...) asparagine; by host" evidence="1">
    <location>
        <position position="70"/>
    </location>
</feature>
<feature type="glycosylation site" description="N-linked (GlcNAc...) asparagine; by host" evidence="1">
    <location>
        <position position="86"/>
    </location>
</feature>
<feature type="glycosylation site" description="N-linked (GlcNAc...) asparagine; by host" evidence="1">
    <location>
        <position position="146"/>
    </location>
</feature>
<feature type="glycosylation site" description="N-linked (GlcNAc...) asparagine; by host" evidence="1">
    <location>
        <position position="200"/>
    </location>
</feature>
<feature type="glycosylation site" description="N-linked (GlcNAc...) asparagine; by host" evidence="1">
    <location>
        <position position="234"/>
    </location>
</feature>
<feature type="glycosylation site" description="N-linked (GlcNAc...) asparagine; by host" evidence="1">
    <location>
        <position position="402"/>
    </location>
</feature>
<feature type="disulfide bond" evidence="1">
    <location>
        <begin position="92"/>
        <end position="417"/>
    </location>
</feature>
<feature type="disulfide bond" evidence="1">
    <location>
        <begin position="124"/>
        <end position="129"/>
    </location>
</feature>
<feature type="disulfide bond" evidence="1">
    <location>
        <begin position="183"/>
        <end position="230"/>
    </location>
</feature>
<feature type="disulfide bond" evidence="1">
    <location>
        <begin position="232"/>
        <end position="237"/>
    </location>
</feature>
<feature type="disulfide bond" evidence="1">
    <location>
        <begin position="278"/>
        <end position="291"/>
    </location>
</feature>
<feature type="disulfide bond" evidence="1">
    <location>
        <begin position="280"/>
        <end position="289"/>
    </location>
</feature>
<feature type="disulfide bond" evidence="1">
    <location>
        <begin position="318"/>
        <end position="337"/>
    </location>
</feature>
<feature type="disulfide bond" evidence="1">
    <location>
        <begin position="421"/>
        <end position="447"/>
    </location>
</feature>
<reference key="1">
    <citation type="submission" date="2005-10" db="EMBL/GenBank/DDBJ databases">
        <title>The NIAID influenza genome sequencing project.</title>
        <authorList>
            <person name="Ghedin E."/>
            <person name="Spiro D."/>
            <person name="Miller N."/>
            <person name="Zaborsky J."/>
            <person name="Feldblyum T."/>
            <person name="Subbu V."/>
            <person name="Shumway M."/>
            <person name="Sparenborg J."/>
            <person name="Groveman L."/>
            <person name="Halpin R."/>
            <person name="Sitz J."/>
            <person name="Koo H."/>
            <person name="Salzberg S.L."/>
            <person name="Webster R.G."/>
            <person name="Hoffmann E."/>
            <person name="Krauss S."/>
            <person name="Naeve C."/>
            <person name="Bao Y."/>
            <person name="Bolotov P."/>
            <person name="Dernovoy D."/>
            <person name="Kiryutin B."/>
            <person name="Lipman D.J."/>
            <person name="Tatusova T."/>
        </authorList>
    </citation>
    <scope>NUCLEOTIDE SEQUENCE [GENOMIC RNA]</scope>
</reference>
<reference key="2">
    <citation type="journal article" date="2004" name="Virus Res.">
        <title>Assembly and budding of influenza virus.</title>
        <authorList>
            <person name="Nayak D.P."/>
            <person name="Hui E.K."/>
            <person name="Barman S."/>
        </authorList>
    </citation>
    <scope>REVIEW</scope>
</reference>
<reference key="3">
    <citation type="journal article" date="2005" name="N. Engl. J. Med.">
        <title>Neuraminidase inhibitors for influenza.</title>
        <authorList>
            <person name="Moscona A."/>
        </authorList>
    </citation>
    <scope>REVIEW</scope>
</reference>
<reference key="4">
    <citation type="journal article" date="2005" name="Biol. Pharm. Bull.">
        <title>Sialobiology of influenza: molecular mechanism of host range variation of influenza viruses.</title>
        <authorList>
            <person name="Suzuki Y."/>
        </authorList>
    </citation>
    <scope>REVIEW</scope>
</reference>
<proteinExistence type="inferred from homology"/>
<accession>Q38SQ5</accession>